<keyword id="KW-0963">Cytoplasm</keyword>
<keyword id="KW-0413">Isomerase</keyword>
<keyword id="KW-0627">Porphyrin biosynthesis</keyword>
<keyword id="KW-0663">Pyridoxal phosphate</keyword>
<organism>
    <name type="scientific">Vibrio campbellii (strain ATCC BAA-1116)</name>
    <dbReference type="NCBI Taxonomy" id="2902295"/>
    <lineage>
        <taxon>Bacteria</taxon>
        <taxon>Pseudomonadati</taxon>
        <taxon>Pseudomonadota</taxon>
        <taxon>Gammaproteobacteria</taxon>
        <taxon>Vibrionales</taxon>
        <taxon>Vibrionaceae</taxon>
        <taxon>Vibrio</taxon>
    </lineage>
</organism>
<proteinExistence type="inferred from homology"/>
<feature type="chain" id="PRO_0000382390" description="Glutamate-1-semialdehyde 2,1-aminomutase">
    <location>
        <begin position="1"/>
        <end position="431"/>
    </location>
</feature>
<feature type="modified residue" description="N6-(pyridoxal phosphate)lysine" evidence="1">
    <location>
        <position position="265"/>
    </location>
</feature>
<comment type="catalytic activity">
    <reaction evidence="1">
        <text>(S)-4-amino-5-oxopentanoate = 5-aminolevulinate</text>
        <dbReference type="Rhea" id="RHEA:14265"/>
        <dbReference type="ChEBI" id="CHEBI:57501"/>
        <dbReference type="ChEBI" id="CHEBI:356416"/>
        <dbReference type="EC" id="5.4.3.8"/>
    </reaction>
</comment>
<comment type="cofactor">
    <cofactor evidence="1">
        <name>pyridoxal 5'-phosphate</name>
        <dbReference type="ChEBI" id="CHEBI:597326"/>
    </cofactor>
</comment>
<comment type="pathway">
    <text evidence="1">Porphyrin-containing compound metabolism; protoporphyrin-IX biosynthesis; 5-aminolevulinate from L-glutamyl-tRNA(Glu): step 2/2.</text>
</comment>
<comment type="subunit">
    <text evidence="1">Homodimer.</text>
</comment>
<comment type="subcellular location">
    <subcellularLocation>
        <location evidence="1">Cytoplasm</location>
    </subcellularLocation>
</comment>
<comment type="similarity">
    <text evidence="1">Belongs to the class-III pyridoxal-phosphate-dependent aminotransferase family. HemL subfamily.</text>
</comment>
<comment type="sequence caution" evidence="2">
    <conflict type="erroneous initiation">
        <sequence resource="EMBL-CDS" id="ABU72362"/>
    </conflict>
</comment>
<protein>
    <recommendedName>
        <fullName evidence="1">Glutamate-1-semialdehyde 2,1-aminomutase</fullName>
        <shortName evidence="1">GSA</shortName>
        <ecNumber evidence="1">5.4.3.8</ecNumber>
    </recommendedName>
    <alternativeName>
        <fullName evidence="1">Glutamate-1-semialdehyde aminotransferase</fullName>
        <shortName evidence="1">GSA-AT</shortName>
    </alternativeName>
</protein>
<reference key="1">
    <citation type="submission" date="2007-08" db="EMBL/GenBank/DDBJ databases">
        <authorList>
            <consortium name="The Vibrio harveyi Genome Sequencing Project"/>
            <person name="Bassler B."/>
            <person name="Clifton S.W."/>
            <person name="Fulton L."/>
            <person name="Delehaunty K."/>
            <person name="Fronick C."/>
            <person name="Harrison M."/>
            <person name="Markivic C."/>
            <person name="Fulton R."/>
            <person name="Tin-Wollam A.-M."/>
            <person name="Shah N."/>
            <person name="Pepin K."/>
            <person name="Nash W."/>
            <person name="Thiruvilangam P."/>
            <person name="Bhonagiri V."/>
            <person name="Waters C."/>
            <person name="Tu K.C."/>
            <person name="Irgon J."/>
            <person name="Wilson R.K."/>
        </authorList>
    </citation>
    <scope>NUCLEOTIDE SEQUENCE [LARGE SCALE GENOMIC DNA]</scope>
    <source>
        <strain>ATCC BAA-1116 / BB120</strain>
    </source>
</reference>
<name>GSA_VIBC1</name>
<dbReference type="EC" id="5.4.3.8" evidence="1"/>
<dbReference type="EMBL" id="CP000789">
    <property type="protein sequence ID" value="ABU72362.1"/>
    <property type="status" value="ALT_INIT"/>
    <property type="molecule type" value="Genomic_DNA"/>
</dbReference>
<dbReference type="RefSeq" id="WP_041853282.1">
    <property type="nucleotide sequence ID" value="NC_009783.1"/>
</dbReference>
<dbReference type="SMR" id="A7MUU9"/>
<dbReference type="KEGG" id="vha:VIBHAR_03417"/>
<dbReference type="PATRIC" id="fig|338187.36.peg.3343"/>
<dbReference type="UniPathway" id="UPA00251">
    <property type="reaction ID" value="UER00317"/>
</dbReference>
<dbReference type="Proteomes" id="UP000008152">
    <property type="component" value="Chromosome I"/>
</dbReference>
<dbReference type="GO" id="GO:0005737">
    <property type="term" value="C:cytoplasm"/>
    <property type="evidence" value="ECO:0007669"/>
    <property type="project" value="UniProtKB-SubCell"/>
</dbReference>
<dbReference type="GO" id="GO:0042286">
    <property type="term" value="F:glutamate-1-semialdehyde 2,1-aminomutase activity"/>
    <property type="evidence" value="ECO:0007669"/>
    <property type="project" value="UniProtKB-UniRule"/>
</dbReference>
<dbReference type="GO" id="GO:0030170">
    <property type="term" value="F:pyridoxal phosphate binding"/>
    <property type="evidence" value="ECO:0007669"/>
    <property type="project" value="InterPro"/>
</dbReference>
<dbReference type="GO" id="GO:0008483">
    <property type="term" value="F:transaminase activity"/>
    <property type="evidence" value="ECO:0007669"/>
    <property type="project" value="InterPro"/>
</dbReference>
<dbReference type="GO" id="GO:0006782">
    <property type="term" value="P:protoporphyrinogen IX biosynthetic process"/>
    <property type="evidence" value="ECO:0007669"/>
    <property type="project" value="UniProtKB-UniRule"/>
</dbReference>
<dbReference type="CDD" id="cd00610">
    <property type="entry name" value="OAT_like"/>
    <property type="match status" value="1"/>
</dbReference>
<dbReference type="FunFam" id="3.40.640.10:FF:000021">
    <property type="entry name" value="Glutamate-1-semialdehyde 2,1-aminomutase"/>
    <property type="match status" value="1"/>
</dbReference>
<dbReference type="FunFam" id="3.90.1150.10:FF:000012">
    <property type="entry name" value="Glutamate-1-semialdehyde 2,1-aminomutase"/>
    <property type="match status" value="1"/>
</dbReference>
<dbReference type="Gene3D" id="3.90.1150.10">
    <property type="entry name" value="Aspartate Aminotransferase, domain 1"/>
    <property type="match status" value="1"/>
</dbReference>
<dbReference type="Gene3D" id="3.40.640.10">
    <property type="entry name" value="Type I PLP-dependent aspartate aminotransferase-like (Major domain)"/>
    <property type="match status" value="1"/>
</dbReference>
<dbReference type="HAMAP" id="MF_00375">
    <property type="entry name" value="HemL_aminotrans_3"/>
    <property type="match status" value="1"/>
</dbReference>
<dbReference type="InterPro" id="IPR004639">
    <property type="entry name" value="4pyrrol_synth_GluAld_NH2Trfase"/>
</dbReference>
<dbReference type="InterPro" id="IPR005814">
    <property type="entry name" value="Aminotrans_3"/>
</dbReference>
<dbReference type="InterPro" id="IPR049704">
    <property type="entry name" value="Aminotrans_3_PPA_site"/>
</dbReference>
<dbReference type="InterPro" id="IPR015424">
    <property type="entry name" value="PyrdxlP-dep_Trfase"/>
</dbReference>
<dbReference type="InterPro" id="IPR015421">
    <property type="entry name" value="PyrdxlP-dep_Trfase_major"/>
</dbReference>
<dbReference type="InterPro" id="IPR015422">
    <property type="entry name" value="PyrdxlP-dep_Trfase_small"/>
</dbReference>
<dbReference type="NCBIfam" id="TIGR00713">
    <property type="entry name" value="hemL"/>
    <property type="match status" value="1"/>
</dbReference>
<dbReference type="NCBIfam" id="NF000818">
    <property type="entry name" value="PRK00062.1"/>
    <property type="match status" value="1"/>
</dbReference>
<dbReference type="PANTHER" id="PTHR43713">
    <property type="entry name" value="GLUTAMATE-1-SEMIALDEHYDE 2,1-AMINOMUTASE"/>
    <property type="match status" value="1"/>
</dbReference>
<dbReference type="PANTHER" id="PTHR43713:SF3">
    <property type="entry name" value="GLUTAMATE-1-SEMIALDEHYDE 2,1-AMINOMUTASE 1, CHLOROPLASTIC-RELATED"/>
    <property type="match status" value="1"/>
</dbReference>
<dbReference type="Pfam" id="PF00202">
    <property type="entry name" value="Aminotran_3"/>
    <property type="match status" value="1"/>
</dbReference>
<dbReference type="SUPFAM" id="SSF53383">
    <property type="entry name" value="PLP-dependent transferases"/>
    <property type="match status" value="1"/>
</dbReference>
<dbReference type="PROSITE" id="PS00600">
    <property type="entry name" value="AA_TRANSFER_CLASS_3"/>
    <property type="match status" value="1"/>
</dbReference>
<sequence length="431" mass="45956">MTKSSELYQKAQQTIPGGVNSPVRAFNGVGGSPLFIERADGALIFDADGKAYIDYVGSWGPMILGHNHAVIREAVIDAAQRGLSFGAPTEMEIAMAELVSELVPSMEQIRMVSSGTEATMSAIRLARGFTGRDKIMKFEGCYHGHADSLLVKAGSGALTLGQPSSPGVPADFAKHTLTATFNDLGSVRELFAANKGEIACIIVEPVAGNMNCIPPVEGFHEGLREICDQEGALLIFDEVMTGFRVALGGAQAHYNIKPDLTTLGKVIGGGMPVGAFGGRKEVMQYVAPTGPVYQAGTLSGNPVAMAAGFACLNLLKEEGNEKRLAAKTKQLAEGFKVLAEKHGIPMVVNQVGGMFGFFFTDQETVTCYEDVTKCDVERFKRFFHLMLKHGVYLAPSAFEASFTSLAHGSKEIDATLEAADRCFAILAEEAK</sequence>
<gene>
    <name evidence="1" type="primary">hemL</name>
    <name type="ordered locus">VIBHAR_03417</name>
</gene>
<evidence type="ECO:0000255" key="1">
    <source>
        <dbReference type="HAMAP-Rule" id="MF_00375"/>
    </source>
</evidence>
<evidence type="ECO:0000305" key="2"/>
<accession>A7MUU9</accession>